<sequence length="253" mass="28171">MEKLLIVNADDFGLCKGQNYGIIDAFRNGVVSSTTAMMNSVDINHAAELSAQYPALPVGMHFVLTFGRPLTAMPSLTDANGELGKWLWQRAGAGTLDLNEIAQELECQFERFSAVFGRPPTHIDSHHHVHMLPQIYPLVAAFAREKSLPLRIDRHEVQQHGLTLDNPRSSEWFNAGFYGENLSEPSFLQLLEHADQQGVNSLEIMCHPAFIDQTLMTSGYCYPRLTELAILTSPTLKPAIAQRGYRLGSFLDC</sequence>
<reference key="1">
    <citation type="journal article" date="2007" name="PLoS Genet.">
        <title>The complete genome sequence of Yersinia pseudotuberculosis IP31758, the causative agent of Far East scarlet-like fever.</title>
        <authorList>
            <person name="Eppinger M."/>
            <person name="Rosovitz M.J."/>
            <person name="Fricke W.F."/>
            <person name="Rasko D.A."/>
            <person name="Kokorina G."/>
            <person name="Fayolle C."/>
            <person name="Lindler L.E."/>
            <person name="Carniel E."/>
            <person name="Ravel J."/>
        </authorList>
    </citation>
    <scope>NUCLEOTIDE SEQUENCE [LARGE SCALE GENOMIC DNA]</scope>
    <source>
        <strain>IP 31758</strain>
    </source>
</reference>
<dbReference type="EC" id="3.5.1.105" evidence="1"/>
<dbReference type="EMBL" id="CP000720">
    <property type="protein sequence ID" value="ABS49071.1"/>
    <property type="molecule type" value="Genomic_DNA"/>
</dbReference>
<dbReference type="RefSeq" id="WP_002212244.1">
    <property type="nucleotide sequence ID" value="NC_009708.1"/>
</dbReference>
<dbReference type="SMR" id="A7FFP8"/>
<dbReference type="GeneID" id="57976011"/>
<dbReference type="KEGG" id="ypi:YpsIP31758_1095"/>
<dbReference type="HOGENOM" id="CLU_064244_4_1_6"/>
<dbReference type="UniPathway" id="UPA00349"/>
<dbReference type="Proteomes" id="UP000002412">
    <property type="component" value="Chromosome"/>
</dbReference>
<dbReference type="GO" id="GO:0005737">
    <property type="term" value="C:cytoplasm"/>
    <property type="evidence" value="ECO:0007669"/>
    <property type="project" value="UniProtKB-SubCell"/>
</dbReference>
<dbReference type="GO" id="GO:0036311">
    <property type="term" value="F:chitin disaccharide deacetylase activity"/>
    <property type="evidence" value="ECO:0007669"/>
    <property type="project" value="UniProtKB-UniRule"/>
</dbReference>
<dbReference type="GO" id="GO:0019213">
    <property type="term" value="F:deacetylase activity"/>
    <property type="evidence" value="ECO:0007669"/>
    <property type="project" value="TreeGrafter"/>
</dbReference>
<dbReference type="GO" id="GO:0046872">
    <property type="term" value="F:metal ion binding"/>
    <property type="evidence" value="ECO:0007669"/>
    <property type="project" value="UniProtKB-KW"/>
</dbReference>
<dbReference type="GO" id="GO:0006032">
    <property type="term" value="P:chitin catabolic process"/>
    <property type="evidence" value="ECO:0007669"/>
    <property type="project" value="UniProtKB-UniPathway"/>
</dbReference>
<dbReference type="GO" id="GO:0052777">
    <property type="term" value="P:diacetylchitobiose catabolic process"/>
    <property type="evidence" value="ECO:0007669"/>
    <property type="project" value="UniProtKB-UniRule"/>
</dbReference>
<dbReference type="GO" id="GO:0000272">
    <property type="term" value="P:polysaccharide catabolic process"/>
    <property type="evidence" value="ECO:0007669"/>
    <property type="project" value="UniProtKB-UniRule"/>
</dbReference>
<dbReference type="CDD" id="cd10803">
    <property type="entry name" value="YdjC_EF3048_like"/>
    <property type="match status" value="1"/>
</dbReference>
<dbReference type="FunFam" id="3.20.20.370:FF:000001">
    <property type="entry name" value="Chitooligosaccharide deacetylase"/>
    <property type="match status" value="1"/>
</dbReference>
<dbReference type="Gene3D" id="3.20.20.370">
    <property type="entry name" value="Glycoside hydrolase/deacetylase"/>
    <property type="match status" value="1"/>
</dbReference>
<dbReference type="HAMAP" id="MF_01246">
    <property type="entry name" value="COD"/>
    <property type="match status" value="1"/>
</dbReference>
<dbReference type="InterPro" id="IPR022948">
    <property type="entry name" value="COD_ChbG_bac"/>
</dbReference>
<dbReference type="InterPro" id="IPR011330">
    <property type="entry name" value="Glyco_hydro/deAcase_b/a-brl"/>
</dbReference>
<dbReference type="InterPro" id="IPR006879">
    <property type="entry name" value="YdjC-like"/>
</dbReference>
<dbReference type="NCBIfam" id="NF002559">
    <property type="entry name" value="PRK02134.1"/>
    <property type="match status" value="1"/>
</dbReference>
<dbReference type="PANTHER" id="PTHR31609:SF1">
    <property type="entry name" value="CARBOHYDRATE DEACETYLASE"/>
    <property type="match status" value="1"/>
</dbReference>
<dbReference type="PANTHER" id="PTHR31609">
    <property type="entry name" value="YDJC DEACETYLASE FAMILY MEMBER"/>
    <property type="match status" value="1"/>
</dbReference>
<dbReference type="Pfam" id="PF04794">
    <property type="entry name" value="YdjC"/>
    <property type="match status" value="1"/>
</dbReference>
<dbReference type="SUPFAM" id="SSF88713">
    <property type="entry name" value="Glycoside hydrolase/deacetylase"/>
    <property type="match status" value="1"/>
</dbReference>
<comment type="function">
    <text evidence="1">Involved in the degradation of chitin. ChbG is essential for growth on the acetylated chitooligosaccharides chitobiose and chitotriose but is dispensable for growth on cellobiose and chitosan dimer, the deacetylated form of chitobiose. Deacetylation of chitobiose-6-P and chitotriose-6-P is necessary for both the activation of the chb promoter by the regulatory protein ChbR and the hydrolysis of phosphorylated beta-glucosides by the phospho-beta-glucosidase ChbF. Catalyzes the removal of only one acetyl group from chitobiose-6-P to yield monoacetylchitobiose-6-P, the inducer of ChbR and the substrate of ChbF.</text>
</comment>
<comment type="catalytic activity">
    <reaction evidence="1">
        <text>N,N'-diacetylchitobiose + H2O = N-acetyl-beta-D-glucosaminyl-(1-&gt;4)-D-glucosamine + acetate</text>
        <dbReference type="Rhea" id="RHEA:27469"/>
        <dbReference type="ChEBI" id="CHEBI:15377"/>
        <dbReference type="ChEBI" id="CHEBI:28681"/>
        <dbReference type="ChEBI" id="CHEBI:30089"/>
        <dbReference type="ChEBI" id="CHEBI:59910"/>
        <dbReference type="EC" id="3.5.1.105"/>
    </reaction>
</comment>
<comment type="catalytic activity">
    <reaction evidence="1">
        <text>diacetylchitobiose-6'-phosphate + H2O = N'-monoacetylchitobiose-6'-phosphate + acetate</text>
        <dbReference type="Rhea" id="RHEA:35083"/>
        <dbReference type="ChEBI" id="CHEBI:15377"/>
        <dbReference type="ChEBI" id="CHEBI:30089"/>
        <dbReference type="ChEBI" id="CHEBI:64883"/>
        <dbReference type="ChEBI" id="CHEBI:71315"/>
    </reaction>
</comment>
<comment type="cofactor">
    <cofactor evidence="1">
        <name>Mg(2+)</name>
        <dbReference type="ChEBI" id="CHEBI:18420"/>
    </cofactor>
</comment>
<comment type="pathway">
    <text evidence="1">Glycan degradation; chitin degradation.</text>
</comment>
<comment type="subunit">
    <text evidence="1">Homodimer.</text>
</comment>
<comment type="subcellular location">
    <subcellularLocation>
        <location evidence="1">Cytoplasm</location>
    </subcellularLocation>
</comment>
<comment type="similarity">
    <text evidence="1">Belongs to the YdjC deacetylase family. ChbG subfamily.</text>
</comment>
<accession>A7FFP8</accession>
<feature type="chain" id="PRO_1000067092" description="Chitooligosaccharide deacetylase">
    <location>
        <begin position="1"/>
        <end position="253"/>
    </location>
</feature>
<feature type="binding site" evidence="1">
    <location>
        <position position="61"/>
    </location>
    <ligand>
        <name>Mg(2+)</name>
        <dbReference type="ChEBI" id="CHEBI:18420"/>
    </ligand>
</feature>
<feature type="binding site" evidence="1">
    <location>
        <position position="126"/>
    </location>
    <ligand>
        <name>Mg(2+)</name>
        <dbReference type="ChEBI" id="CHEBI:18420"/>
    </ligand>
</feature>
<proteinExistence type="inferred from homology"/>
<evidence type="ECO:0000255" key="1">
    <source>
        <dbReference type="HAMAP-Rule" id="MF_01246"/>
    </source>
</evidence>
<protein>
    <recommendedName>
        <fullName evidence="1">Chitooligosaccharide deacetylase</fullName>
        <shortName evidence="1">COD</shortName>
        <ecNumber evidence="1">3.5.1.105</ecNumber>
    </recommendedName>
    <alternativeName>
        <fullName evidence="1">Chitin disaccharide deacetylase</fullName>
    </alternativeName>
    <alternativeName>
        <fullName evidence="1">Chitobiose deacetylase</fullName>
    </alternativeName>
    <alternativeName>
        <fullName evidence="1">Chitobiose-6P deacetylase</fullName>
    </alternativeName>
    <alternativeName>
        <fullName evidence="1">Chitotriose deacetylase</fullName>
    </alternativeName>
    <alternativeName>
        <fullName evidence="1">Chitotriose-6P deacetylase</fullName>
    </alternativeName>
</protein>
<organism>
    <name type="scientific">Yersinia pseudotuberculosis serotype O:1b (strain IP 31758)</name>
    <dbReference type="NCBI Taxonomy" id="349747"/>
    <lineage>
        <taxon>Bacteria</taxon>
        <taxon>Pseudomonadati</taxon>
        <taxon>Pseudomonadota</taxon>
        <taxon>Gammaproteobacteria</taxon>
        <taxon>Enterobacterales</taxon>
        <taxon>Yersiniaceae</taxon>
        <taxon>Yersinia</taxon>
    </lineage>
</organism>
<keyword id="KW-0119">Carbohydrate metabolism</keyword>
<keyword id="KW-0146">Chitin degradation</keyword>
<keyword id="KW-0963">Cytoplasm</keyword>
<keyword id="KW-0378">Hydrolase</keyword>
<keyword id="KW-0460">Magnesium</keyword>
<keyword id="KW-0479">Metal-binding</keyword>
<keyword id="KW-0624">Polysaccharide degradation</keyword>
<name>CHBG_YERP3</name>
<gene>
    <name evidence="1" type="primary">chbG</name>
    <name type="ordered locus">YpsIP31758_1095</name>
</gene>